<reference key="1">
    <citation type="journal article" date="2004" name="Proc. Natl. Acad. Sci. U.S.A.">
        <title>Complete genomes of two clinical Staphylococcus aureus strains: evidence for the rapid evolution of virulence and drug resistance.</title>
        <authorList>
            <person name="Holden M.T.G."/>
            <person name="Feil E.J."/>
            <person name="Lindsay J.A."/>
            <person name="Peacock S.J."/>
            <person name="Day N.P.J."/>
            <person name="Enright M.C."/>
            <person name="Foster T.J."/>
            <person name="Moore C.E."/>
            <person name="Hurst L."/>
            <person name="Atkin R."/>
            <person name="Barron A."/>
            <person name="Bason N."/>
            <person name="Bentley S.D."/>
            <person name="Chillingworth C."/>
            <person name="Chillingworth T."/>
            <person name="Churcher C."/>
            <person name="Clark L."/>
            <person name="Corton C."/>
            <person name="Cronin A."/>
            <person name="Doggett J."/>
            <person name="Dowd L."/>
            <person name="Feltwell T."/>
            <person name="Hance Z."/>
            <person name="Harris B."/>
            <person name="Hauser H."/>
            <person name="Holroyd S."/>
            <person name="Jagels K."/>
            <person name="James K.D."/>
            <person name="Lennard N."/>
            <person name="Line A."/>
            <person name="Mayes R."/>
            <person name="Moule S."/>
            <person name="Mungall K."/>
            <person name="Ormond D."/>
            <person name="Quail M.A."/>
            <person name="Rabbinowitsch E."/>
            <person name="Rutherford K.M."/>
            <person name="Sanders M."/>
            <person name="Sharp S."/>
            <person name="Simmonds M."/>
            <person name="Stevens K."/>
            <person name="Whitehead S."/>
            <person name="Barrell B.G."/>
            <person name="Spratt B.G."/>
            <person name="Parkhill J."/>
        </authorList>
    </citation>
    <scope>NUCLEOTIDE SEQUENCE [LARGE SCALE GENOMIC DNA]</scope>
    <source>
        <strain>MSSA476</strain>
    </source>
</reference>
<dbReference type="EMBL" id="BX571857">
    <property type="protein sequence ID" value="CAG43831.1"/>
    <property type="molecule type" value="Genomic_DNA"/>
</dbReference>
<dbReference type="RefSeq" id="WP_000808968.1">
    <property type="nucleotide sequence ID" value="NC_002953.3"/>
</dbReference>
<dbReference type="SMR" id="Q6G7J0"/>
<dbReference type="KEGG" id="sas:SAS2023"/>
<dbReference type="HOGENOM" id="CLU_114306_2_2_9"/>
<dbReference type="GO" id="GO:1990904">
    <property type="term" value="C:ribonucleoprotein complex"/>
    <property type="evidence" value="ECO:0007669"/>
    <property type="project" value="UniProtKB-KW"/>
</dbReference>
<dbReference type="GO" id="GO:0005840">
    <property type="term" value="C:ribosome"/>
    <property type="evidence" value="ECO:0007669"/>
    <property type="project" value="UniProtKB-KW"/>
</dbReference>
<dbReference type="GO" id="GO:0003735">
    <property type="term" value="F:structural constituent of ribosome"/>
    <property type="evidence" value="ECO:0007669"/>
    <property type="project" value="InterPro"/>
</dbReference>
<dbReference type="GO" id="GO:0006412">
    <property type="term" value="P:translation"/>
    <property type="evidence" value="ECO:0007669"/>
    <property type="project" value="UniProtKB-UniRule"/>
</dbReference>
<dbReference type="Gene3D" id="4.10.830.30">
    <property type="entry name" value="Ribosomal protein L31"/>
    <property type="match status" value="1"/>
</dbReference>
<dbReference type="HAMAP" id="MF_00502">
    <property type="entry name" value="Ribosomal_bL31_2"/>
    <property type="match status" value="1"/>
</dbReference>
<dbReference type="InterPro" id="IPR034704">
    <property type="entry name" value="Ribosomal_bL28/bL31-like_sf"/>
</dbReference>
<dbReference type="InterPro" id="IPR002150">
    <property type="entry name" value="Ribosomal_bL31"/>
</dbReference>
<dbReference type="InterPro" id="IPR027493">
    <property type="entry name" value="Ribosomal_bL31_B"/>
</dbReference>
<dbReference type="InterPro" id="IPR042105">
    <property type="entry name" value="Ribosomal_bL31_sf"/>
</dbReference>
<dbReference type="NCBIfam" id="TIGR00105">
    <property type="entry name" value="L31"/>
    <property type="match status" value="1"/>
</dbReference>
<dbReference type="NCBIfam" id="NF002462">
    <property type="entry name" value="PRK01678.1"/>
    <property type="match status" value="1"/>
</dbReference>
<dbReference type="PANTHER" id="PTHR33280">
    <property type="entry name" value="50S RIBOSOMAL PROTEIN L31, CHLOROPLASTIC"/>
    <property type="match status" value="1"/>
</dbReference>
<dbReference type="PANTHER" id="PTHR33280:SF1">
    <property type="entry name" value="LARGE RIBOSOMAL SUBUNIT PROTEIN BL31C"/>
    <property type="match status" value="1"/>
</dbReference>
<dbReference type="Pfam" id="PF01197">
    <property type="entry name" value="Ribosomal_L31"/>
    <property type="match status" value="1"/>
</dbReference>
<dbReference type="PRINTS" id="PR01249">
    <property type="entry name" value="RIBOSOMALL31"/>
</dbReference>
<dbReference type="SUPFAM" id="SSF143800">
    <property type="entry name" value="L28p-like"/>
    <property type="match status" value="1"/>
</dbReference>
<dbReference type="PROSITE" id="PS01143">
    <property type="entry name" value="RIBOSOMAL_L31"/>
    <property type="match status" value="1"/>
</dbReference>
<accession>Q6G7J0</accession>
<feature type="chain" id="PRO_0000173259" description="Large ribosomal subunit protein bL31B">
    <location>
        <begin position="1"/>
        <end position="84"/>
    </location>
</feature>
<organism>
    <name type="scientific">Staphylococcus aureus (strain MSSA476)</name>
    <dbReference type="NCBI Taxonomy" id="282459"/>
    <lineage>
        <taxon>Bacteria</taxon>
        <taxon>Bacillati</taxon>
        <taxon>Bacillota</taxon>
        <taxon>Bacilli</taxon>
        <taxon>Bacillales</taxon>
        <taxon>Staphylococcaceae</taxon>
        <taxon>Staphylococcus</taxon>
    </lineage>
</organism>
<proteinExistence type="inferred from homology"/>
<evidence type="ECO:0000255" key="1">
    <source>
        <dbReference type="HAMAP-Rule" id="MF_00502"/>
    </source>
</evidence>
<evidence type="ECO:0000305" key="2"/>
<sequence length="84" mass="9723">MKQGIHPEYHQVIFLDTTTNFKFLSGSTKTSSEMMEWEDGKEYPVIRLDISSDSHPFYTGRQKFAAADGRVERFNKKFGLKSNN</sequence>
<keyword id="KW-0687">Ribonucleoprotein</keyword>
<keyword id="KW-0689">Ribosomal protein</keyword>
<protein>
    <recommendedName>
        <fullName evidence="1">Large ribosomal subunit protein bL31B</fullName>
    </recommendedName>
    <alternativeName>
        <fullName evidence="2">50S ribosomal protein L31 type B</fullName>
    </alternativeName>
</protein>
<name>RL31B_STAAS</name>
<comment type="subunit">
    <text evidence="1">Part of the 50S ribosomal subunit.</text>
</comment>
<comment type="similarity">
    <text evidence="1">Belongs to the bacterial ribosomal protein bL31 family. Type B subfamily.</text>
</comment>
<gene>
    <name evidence="1" type="primary">rpmE2</name>
    <name type="ordered locus">SAS2023</name>
</gene>